<dbReference type="EMBL" id="AK003291">
    <property type="protein sequence ID" value="BAB22694.1"/>
    <property type="molecule type" value="mRNA"/>
</dbReference>
<dbReference type="EMBL" id="AK010470">
    <property type="protein sequence ID" value="BAB26963.1"/>
    <property type="molecule type" value="mRNA"/>
</dbReference>
<dbReference type="EMBL" id="AK019199">
    <property type="protein sequence ID" value="BAB31597.1"/>
    <property type="molecule type" value="mRNA"/>
</dbReference>
<dbReference type="EMBL" id="BC021590">
    <property type="protein sequence ID" value="AAH21590.1"/>
    <property type="molecule type" value="mRNA"/>
</dbReference>
<dbReference type="EMBL" id="BC037589">
    <property type="protein sequence ID" value="AAH37589.1"/>
    <property type="molecule type" value="mRNA"/>
</dbReference>
<dbReference type="CCDS" id="CCDS37643.1"/>
<dbReference type="RefSeq" id="NP_001158201.1">
    <property type="nucleotide sequence ID" value="NM_001164729.1"/>
</dbReference>
<dbReference type="RefSeq" id="NP_079641.1">
    <property type="nucleotide sequence ID" value="NM_025365.3"/>
</dbReference>
<dbReference type="SMR" id="Q9CQN3"/>
<dbReference type="FunCoup" id="Q9CQN3">
    <property type="interactions" value="838"/>
</dbReference>
<dbReference type="STRING" id="10090.ENSMUSP00000108927"/>
<dbReference type="PhosphoSitePlus" id="Q9CQN3"/>
<dbReference type="jPOST" id="Q9CQN3"/>
<dbReference type="PaxDb" id="10090-ENSMUSP00000108926"/>
<dbReference type="PeptideAtlas" id="Q9CQN3"/>
<dbReference type="ProteomicsDB" id="259153"/>
<dbReference type="Pumba" id="Q9CQN3"/>
<dbReference type="TopDownProteomics" id="Q9CQN3"/>
<dbReference type="Antibodypedia" id="1581">
    <property type="antibodies" value="84 antibodies from 19 providers"/>
</dbReference>
<dbReference type="Ensembl" id="ENSMUST00000113301.2">
    <property type="protein sequence ID" value="ENSMUSP00000108926.2"/>
    <property type="gene ID" value="ENSMUSG00000033475.16"/>
</dbReference>
<dbReference type="Ensembl" id="ENSMUST00000113302.10">
    <property type="protein sequence ID" value="ENSMUSP00000108927.4"/>
    <property type="gene ID" value="ENSMUSG00000033475.16"/>
</dbReference>
<dbReference type="GeneID" id="66119"/>
<dbReference type="KEGG" id="mmu:66119"/>
<dbReference type="UCSC" id="uc008cvx.2">
    <property type="organism name" value="mouse"/>
</dbReference>
<dbReference type="AGR" id="MGI:1913369"/>
<dbReference type="CTD" id="100188893"/>
<dbReference type="MGI" id="MGI:1913369">
    <property type="gene designation" value="Tomm6"/>
</dbReference>
<dbReference type="VEuPathDB" id="HostDB:ENSMUSG00000033475"/>
<dbReference type="eggNOG" id="ENOG502S9AX">
    <property type="taxonomic scope" value="Eukaryota"/>
</dbReference>
<dbReference type="GeneTree" id="ENSGT00390000002376"/>
<dbReference type="HOGENOM" id="CLU_2687147_0_0_1"/>
<dbReference type="InParanoid" id="Q9CQN3"/>
<dbReference type="OMA" id="WIRGAYR"/>
<dbReference type="OrthoDB" id="6016677at2759"/>
<dbReference type="TreeFam" id="TF330716"/>
<dbReference type="Reactome" id="R-MMU-5205685">
    <property type="pathway name" value="PINK1-PRKN Mediated Mitophagy"/>
</dbReference>
<dbReference type="BioGRID-ORCS" id="66119">
    <property type="hits" value="2 hits in 75 CRISPR screens"/>
</dbReference>
<dbReference type="ChiTaRS" id="Tomm6">
    <property type="organism name" value="mouse"/>
</dbReference>
<dbReference type="PRO" id="PR:Q9CQN3"/>
<dbReference type="Proteomes" id="UP000000589">
    <property type="component" value="Chromosome 17"/>
</dbReference>
<dbReference type="RNAct" id="Q9CQN3">
    <property type="molecule type" value="protein"/>
</dbReference>
<dbReference type="Bgee" id="ENSMUSG00000033475">
    <property type="expression patterns" value="Expressed in yolk sac and 94 other cell types or tissues"/>
</dbReference>
<dbReference type="GO" id="GO:0005742">
    <property type="term" value="C:mitochondrial outer membrane translocase complex"/>
    <property type="evidence" value="ECO:0007669"/>
    <property type="project" value="InterPro"/>
</dbReference>
<dbReference type="GO" id="GO:0005739">
    <property type="term" value="C:mitochondrion"/>
    <property type="evidence" value="ECO:0007005"/>
    <property type="project" value="MGI"/>
</dbReference>
<dbReference type="GO" id="GO:0015031">
    <property type="term" value="P:protein transport"/>
    <property type="evidence" value="ECO:0007669"/>
    <property type="project" value="UniProtKB-KW"/>
</dbReference>
<dbReference type="InterPro" id="IPR029182">
    <property type="entry name" value="TOMM6"/>
</dbReference>
<dbReference type="PANTHER" id="PTHR15527">
    <property type="entry name" value="MITOCHONDRIAL IMPORT RECEPTOR SUBUNIT TOM6 HOMOLOG"/>
    <property type="match status" value="1"/>
</dbReference>
<dbReference type="PANTHER" id="PTHR15527:SF0">
    <property type="entry name" value="MITOCHONDRIAL IMPORT RECEPTOR SUBUNIT TOM6 HOMOLOG"/>
    <property type="match status" value="1"/>
</dbReference>
<dbReference type="Pfam" id="PF15184">
    <property type="entry name" value="TOM6p"/>
    <property type="match status" value="1"/>
</dbReference>
<organism>
    <name type="scientific">Mus musculus</name>
    <name type="common">Mouse</name>
    <dbReference type="NCBI Taxonomy" id="10090"/>
    <lineage>
        <taxon>Eukaryota</taxon>
        <taxon>Metazoa</taxon>
        <taxon>Chordata</taxon>
        <taxon>Craniata</taxon>
        <taxon>Vertebrata</taxon>
        <taxon>Euteleostomi</taxon>
        <taxon>Mammalia</taxon>
        <taxon>Eutheria</taxon>
        <taxon>Euarchontoglires</taxon>
        <taxon>Glires</taxon>
        <taxon>Rodentia</taxon>
        <taxon>Myomorpha</taxon>
        <taxon>Muroidea</taxon>
        <taxon>Muridae</taxon>
        <taxon>Murinae</taxon>
        <taxon>Mus</taxon>
        <taxon>Mus</taxon>
    </lineage>
</organism>
<accession>Q9CQN3</accession>
<proteinExistence type="inferred from homology"/>
<comment type="subunit">
    <text evidence="1">Forms part of the preprotein translocase complex of the outer mitochondrial membrane (TOM complex) which consists of at least 7 different proteins (TOMM5, TOMM6, TOMM7, TOMM20, TOMM22, TOMM40 and TOMM70).</text>
</comment>
<comment type="subcellular location">
    <subcellularLocation>
        <location evidence="1">Mitochondrion outer membrane</location>
    </subcellularLocation>
</comment>
<comment type="similarity">
    <text evidence="4">Belongs to the Tom6 family.</text>
</comment>
<name>TOM6_MOUSE</name>
<sequence>MASSGVTVSAAGSASEASEVPDNVGDWLRGVFRFATDRNDFRRNLILNLGLFAAGVWLARNLSDIDLMAPQPGV</sequence>
<keyword id="KW-0007">Acetylation</keyword>
<keyword id="KW-0472">Membrane</keyword>
<keyword id="KW-0496">Mitochondrion</keyword>
<keyword id="KW-1000">Mitochondrion outer membrane</keyword>
<keyword id="KW-0653">Protein transport</keyword>
<keyword id="KW-1185">Reference proteome</keyword>
<keyword id="KW-0813">Transport</keyword>
<reference key="1">
    <citation type="journal article" date="2005" name="Science">
        <title>The transcriptional landscape of the mammalian genome.</title>
        <authorList>
            <person name="Carninci P."/>
            <person name="Kasukawa T."/>
            <person name="Katayama S."/>
            <person name="Gough J."/>
            <person name="Frith M.C."/>
            <person name="Maeda N."/>
            <person name="Oyama R."/>
            <person name="Ravasi T."/>
            <person name="Lenhard B."/>
            <person name="Wells C."/>
            <person name="Kodzius R."/>
            <person name="Shimokawa K."/>
            <person name="Bajic V.B."/>
            <person name="Brenner S.E."/>
            <person name="Batalov S."/>
            <person name="Forrest A.R."/>
            <person name="Zavolan M."/>
            <person name="Davis M.J."/>
            <person name="Wilming L.G."/>
            <person name="Aidinis V."/>
            <person name="Allen J.E."/>
            <person name="Ambesi-Impiombato A."/>
            <person name="Apweiler R."/>
            <person name="Aturaliya R.N."/>
            <person name="Bailey T.L."/>
            <person name="Bansal M."/>
            <person name="Baxter L."/>
            <person name="Beisel K.W."/>
            <person name="Bersano T."/>
            <person name="Bono H."/>
            <person name="Chalk A.M."/>
            <person name="Chiu K.P."/>
            <person name="Choudhary V."/>
            <person name="Christoffels A."/>
            <person name="Clutterbuck D.R."/>
            <person name="Crowe M.L."/>
            <person name="Dalla E."/>
            <person name="Dalrymple B.P."/>
            <person name="de Bono B."/>
            <person name="Della Gatta G."/>
            <person name="di Bernardo D."/>
            <person name="Down T."/>
            <person name="Engstrom P."/>
            <person name="Fagiolini M."/>
            <person name="Faulkner G."/>
            <person name="Fletcher C.F."/>
            <person name="Fukushima T."/>
            <person name="Furuno M."/>
            <person name="Futaki S."/>
            <person name="Gariboldi M."/>
            <person name="Georgii-Hemming P."/>
            <person name="Gingeras T.R."/>
            <person name="Gojobori T."/>
            <person name="Green R.E."/>
            <person name="Gustincich S."/>
            <person name="Harbers M."/>
            <person name="Hayashi Y."/>
            <person name="Hensch T.K."/>
            <person name="Hirokawa N."/>
            <person name="Hill D."/>
            <person name="Huminiecki L."/>
            <person name="Iacono M."/>
            <person name="Ikeo K."/>
            <person name="Iwama A."/>
            <person name="Ishikawa T."/>
            <person name="Jakt M."/>
            <person name="Kanapin A."/>
            <person name="Katoh M."/>
            <person name="Kawasawa Y."/>
            <person name="Kelso J."/>
            <person name="Kitamura H."/>
            <person name="Kitano H."/>
            <person name="Kollias G."/>
            <person name="Krishnan S.P."/>
            <person name="Kruger A."/>
            <person name="Kummerfeld S.K."/>
            <person name="Kurochkin I.V."/>
            <person name="Lareau L.F."/>
            <person name="Lazarevic D."/>
            <person name="Lipovich L."/>
            <person name="Liu J."/>
            <person name="Liuni S."/>
            <person name="McWilliam S."/>
            <person name="Madan Babu M."/>
            <person name="Madera M."/>
            <person name="Marchionni L."/>
            <person name="Matsuda H."/>
            <person name="Matsuzawa S."/>
            <person name="Miki H."/>
            <person name="Mignone F."/>
            <person name="Miyake S."/>
            <person name="Morris K."/>
            <person name="Mottagui-Tabar S."/>
            <person name="Mulder N."/>
            <person name="Nakano N."/>
            <person name="Nakauchi H."/>
            <person name="Ng P."/>
            <person name="Nilsson R."/>
            <person name="Nishiguchi S."/>
            <person name="Nishikawa S."/>
            <person name="Nori F."/>
            <person name="Ohara O."/>
            <person name="Okazaki Y."/>
            <person name="Orlando V."/>
            <person name="Pang K.C."/>
            <person name="Pavan W.J."/>
            <person name="Pavesi G."/>
            <person name="Pesole G."/>
            <person name="Petrovsky N."/>
            <person name="Piazza S."/>
            <person name="Reed J."/>
            <person name="Reid J.F."/>
            <person name="Ring B.Z."/>
            <person name="Ringwald M."/>
            <person name="Rost B."/>
            <person name="Ruan Y."/>
            <person name="Salzberg S.L."/>
            <person name="Sandelin A."/>
            <person name="Schneider C."/>
            <person name="Schoenbach C."/>
            <person name="Sekiguchi K."/>
            <person name="Semple C.A."/>
            <person name="Seno S."/>
            <person name="Sessa L."/>
            <person name="Sheng Y."/>
            <person name="Shibata Y."/>
            <person name="Shimada H."/>
            <person name="Shimada K."/>
            <person name="Silva D."/>
            <person name="Sinclair B."/>
            <person name="Sperling S."/>
            <person name="Stupka E."/>
            <person name="Sugiura K."/>
            <person name="Sultana R."/>
            <person name="Takenaka Y."/>
            <person name="Taki K."/>
            <person name="Tammoja K."/>
            <person name="Tan S.L."/>
            <person name="Tang S."/>
            <person name="Taylor M.S."/>
            <person name="Tegner J."/>
            <person name="Teichmann S.A."/>
            <person name="Ueda H.R."/>
            <person name="van Nimwegen E."/>
            <person name="Verardo R."/>
            <person name="Wei C.L."/>
            <person name="Yagi K."/>
            <person name="Yamanishi H."/>
            <person name="Zabarovsky E."/>
            <person name="Zhu S."/>
            <person name="Zimmer A."/>
            <person name="Hide W."/>
            <person name="Bult C."/>
            <person name="Grimmond S.M."/>
            <person name="Teasdale R.D."/>
            <person name="Liu E.T."/>
            <person name="Brusic V."/>
            <person name="Quackenbush J."/>
            <person name="Wahlestedt C."/>
            <person name="Mattick J.S."/>
            <person name="Hume D.A."/>
            <person name="Kai C."/>
            <person name="Sasaki D."/>
            <person name="Tomaru Y."/>
            <person name="Fukuda S."/>
            <person name="Kanamori-Katayama M."/>
            <person name="Suzuki M."/>
            <person name="Aoki J."/>
            <person name="Arakawa T."/>
            <person name="Iida J."/>
            <person name="Imamura K."/>
            <person name="Itoh M."/>
            <person name="Kato T."/>
            <person name="Kawaji H."/>
            <person name="Kawagashira N."/>
            <person name="Kawashima T."/>
            <person name="Kojima M."/>
            <person name="Kondo S."/>
            <person name="Konno H."/>
            <person name="Nakano K."/>
            <person name="Ninomiya N."/>
            <person name="Nishio T."/>
            <person name="Okada M."/>
            <person name="Plessy C."/>
            <person name="Shibata K."/>
            <person name="Shiraki T."/>
            <person name="Suzuki S."/>
            <person name="Tagami M."/>
            <person name="Waki K."/>
            <person name="Watahiki A."/>
            <person name="Okamura-Oho Y."/>
            <person name="Suzuki H."/>
            <person name="Kawai J."/>
            <person name="Hayashizaki Y."/>
        </authorList>
    </citation>
    <scope>NUCLEOTIDE SEQUENCE [LARGE SCALE MRNA]</scope>
    <source>
        <strain>C57BL/6J</strain>
    </source>
</reference>
<reference key="2">
    <citation type="journal article" date="2004" name="Genome Res.">
        <title>The status, quality, and expansion of the NIH full-length cDNA project: the Mammalian Gene Collection (MGC).</title>
        <authorList>
            <consortium name="The MGC Project Team"/>
        </authorList>
    </citation>
    <scope>NUCLEOTIDE SEQUENCE [LARGE SCALE MRNA]</scope>
    <source>
        <strain>FVB/N-3</strain>
        <tissue>Mammary tumor</tissue>
    </source>
</reference>
<protein>
    <recommendedName>
        <fullName>Mitochondrial import receptor subunit TOM6 homolog</fullName>
    </recommendedName>
    <alternativeName>
        <fullName>Overexpressed breast tumor protein homolog</fullName>
    </alternativeName>
    <alternativeName>
        <fullName>Translocase of outer membrane 6 kDa subunit homolog</fullName>
    </alternativeName>
</protein>
<evidence type="ECO:0000250" key="1"/>
<evidence type="ECO:0000250" key="2">
    <source>
        <dbReference type="UniProtKB" id="Q96B49"/>
    </source>
</evidence>
<evidence type="ECO:0000256" key="3">
    <source>
        <dbReference type="SAM" id="MobiDB-lite"/>
    </source>
</evidence>
<evidence type="ECO:0000305" key="4"/>
<gene>
    <name type="primary">Tomm6</name>
    <name type="synonym">Obtp</name>
    <name type="synonym">Tom6</name>
</gene>
<feature type="initiator methionine" description="Removed" evidence="2">
    <location>
        <position position="1"/>
    </location>
</feature>
<feature type="chain" id="PRO_0000302857" description="Mitochondrial import receptor subunit TOM6 homolog">
    <location>
        <begin position="2"/>
        <end position="74"/>
    </location>
</feature>
<feature type="region of interest" description="Disordered" evidence="3">
    <location>
        <begin position="1"/>
        <end position="21"/>
    </location>
</feature>
<feature type="compositionally biased region" description="Low complexity" evidence="3">
    <location>
        <begin position="1"/>
        <end position="20"/>
    </location>
</feature>
<feature type="modified residue" description="N-acetylalanine" evidence="2">
    <location>
        <position position="2"/>
    </location>
</feature>